<evidence type="ECO:0000255" key="1">
    <source>
        <dbReference type="HAMAP-Rule" id="MF_00392"/>
    </source>
</evidence>
<organism>
    <name type="scientific">Myxococcus xanthus (strain DK1622)</name>
    <dbReference type="NCBI Taxonomy" id="246197"/>
    <lineage>
        <taxon>Bacteria</taxon>
        <taxon>Pseudomonadati</taxon>
        <taxon>Myxococcota</taxon>
        <taxon>Myxococcia</taxon>
        <taxon>Myxococcales</taxon>
        <taxon>Cystobacterineae</taxon>
        <taxon>Myxococcaceae</taxon>
        <taxon>Myxococcus</taxon>
    </lineage>
</organism>
<dbReference type="EC" id="2.4.1.182" evidence="1"/>
<dbReference type="EMBL" id="CP000113">
    <property type="protein sequence ID" value="ABF90745.1"/>
    <property type="molecule type" value="Genomic_DNA"/>
</dbReference>
<dbReference type="RefSeq" id="WP_011554705.1">
    <property type="nucleotide sequence ID" value="NC_008095.1"/>
</dbReference>
<dbReference type="SMR" id="Q1D393"/>
<dbReference type="STRING" id="246197.MXAN_4718"/>
<dbReference type="CAZy" id="GT19">
    <property type="family name" value="Glycosyltransferase Family 19"/>
</dbReference>
<dbReference type="EnsemblBacteria" id="ABF90745">
    <property type="protein sequence ID" value="ABF90745"/>
    <property type="gene ID" value="MXAN_4718"/>
</dbReference>
<dbReference type="GeneID" id="41362017"/>
<dbReference type="KEGG" id="mxa:MXAN_4718"/>
<dbReference type="eggNOG" id="COG0763">
    <property type="taxonomic scope" value="Bacteria"/>
</dbReference>
<dbReference type="HOGENOM" id="CLU_036577_3_0_7"/>
<dbReference type="OrthoDB" id="9801642at2"/>
<dbReference type="UniPathway" id="UPA00973"/>
<dbReference type="Proteomes" id="UP000002402">
    <property type="component" value="Chromosome"/>
</dbReference>
<dbReference type="GO" id="GO:0016020">
    <property type="term" value="C:membrane"/>
    <property type="evidence" value="ECO:0007669"/>
    <property type="project" value="GOC"/>
</dbReference>
<dbReference type="GO" id="GO:0008915">
    <property type="term" value="F:lipid-A-disaccharide synthase activity"/>
    <property type="evidence" value="ECO:0007669"/>
    <property type="project" value="UniProtKB-UniRule"/>
</dbReference>
<dbReference type="GO" id="GO:0005543">
    <property type="term" value="F:phospholipid binding"/>
    <property type="evidence" value="ECO:0007669"/>
    <property type="project" value="TreeGrafter"/>
</dbReference>
<dbReference type="GO" id="GO:0009245">
    <property type="term" value="P:lipid A biosynthetic process"/>
    <property type="evidence" value="ECO:0007669"/>
    <property type="project" value="UniProtKB-UniRule"/>
</dbReference>
<dbReference type="HAMAP" id="MF_00392">
    <property type="entry name" value="LpxB"/>
    <property type="match status" value="1"/>
</dbReference>
<dbReference type="InterPro" id="IPR003835">
    <property type="entry name" value="Glyco_trans_19"/>
</dbReference>
<dbReference type="NCBIfam" id="TIGR00215">
    <property type="entry name" value="lpxB"/>
    <property type="match status" value="1"/>
</dbReference>
<dbReference type="PANTHER" id="PTHR30372">
    <property type="entry name" value="LIPID-A-DISACCHARIDE SYNTHASE"/>
    <property type="match status" value="1"/>
</dbReference>
<dbReference type="PANTHER" id="PTHR30372:SF4">
    <property type="entry name" value="LIPID-A-DISACCHARIDE SYNTHASE, MITOCHONDRIAL-RELATED"/>
    <property type="match status" value="1"/>
</dbReference>
<dbReference type="Pfam" id="PF02684">
    <property type="entry name" value="LpxB"/>
    <property type="match status" value="1"/>
</dbReference>
<dbReference type="SUPFAM" id="SSF53756">
    <property type="entry name" value="UDP-Glycosyltransferase/glycogen phosphorylase"/>
    <property type="match status" value="1"/>
</dbReference>
<proteinExistence type="inferred from homology"/>
<name>LPXB_MYXXD</name>
<feature type="chain" id="PRO_0000255199" description="Lipid-A-disaccharide synthase">
    <location>
        <begin position="1"/>
        <end position="383"/>
    </location>
</feature>
<accession>Q1D393</accession>
<keyword id="KW-0328">Glycosyltransferase</keyword>
<keyword id="KW-0441">Lipid A biosynthesis</keyword>
<keyword id="KW-0444">Lipid biosynthesis</keyword>
<keyword id="KW-0443">Lipid metabolism</keyword>
<keyword id="KW-1185">Reference proteome</keyword>
<keyword id="KW-0808">Transferase</keyword>
<gene>
    <name evidence="1" type="primary">lpxB</name>
    <name type="ordered locus">MXAN_4718</name>
</gene>
<reference key="1">
    <citation type="journal article" date="2006" name="Proc. Natl. Acad. Sci. U.S.A.">
        <title>Evolution of sensory complexity recorded in a myxobacterial genome.</title>
        <authorList>
            <person name="Goldman B.S."/>
            <person name="Nierman W.C."/>
            <person name="Kaiser D."/>
            <person name="Slater S.C."/>
            <person name="Durkin A.S."/>
            <person name="Eisen J.A."/>
            <person name="Ronning C.M."/>
            <person name="Barbazuk W.B."/>
            <person name="Blanchard M."/>
            <person name="Field C."/>
            <person name="Halling C."/>
            <person name="Hinkle G."/>
            <person name="Iartchuk O."/>
            <person name="Kim H.S."/>
            <person name="Mackenzie C."/>
            <person name="Madupu R."/>
            <person name="Miller N."/>
            <person name="Shvartsbeyn A."/>
            <person name="Sullivan S.A."/>
            <person name="Vaudin M."/>
            <person name="Wiegand R."/>
            <person name="Kaplan H.B."/>
        </authorList>
    </citation>
    <scope>NUCLEOTIDE SEQUENCE [LARGE SCALE GENOMIC DNA]</scope>
    <source>
        <strain>DK1622</strain>
    </source>
</reference>
<comment type="function">
    <text evidence="1">Condensation of UDP-2,3-diacylglucosamine and 2,3-diacylglucosamine-1-phosphate to form lipid A disaccharide, a precursor of lipid A, a phosphorylated glycolipid that anchors the lipopolysaccharide to the outer membrane of the cell.</text>
</comment>
<comment type="catalytic activity">
    <reaction evidence="1">
        <text>a lipid X + a UDP-2-N,3-O-bis[(3R)-3-hydroxyacyl]-alpha-D-glucosamine = a lipid A disaccharide + UDP + H(+)</text>
        <dbReference type="Rhea" id="RHEA:67828"/>
        <dbReference type="ChEBI" id="CHEBI:15378"/>
        <dbReference type="ChEBI" id="CHEBI:58223"/>
        <dbReference type="ChEBI" id="CHEBI:137748"/>
        <dbReference type="ChEBI" id="CHEBI:176338"/>
        <dbReference type="ChEBI" id="CHEBI:176343"/>
        <dbReference type="EC" id="2.4.1.182"/>
    </reaction>
</comment>
<comment type="pathway">
    <text evidence="1">Bacterial outer membrane biogenesis; LPS lipid A biosynthesis.</text>
</comment>
<comment type="similarity">
    <text evidence="1">Belongs to the LpxB family.</text>
</comment>
<sequence length="383" mass="41692">MTNPPRILVVAGEASGDTHAAELVAALRARRPDLTFFGMGGARLAAQGVELLFDAREVSVMGITEVLPRIPRILQILKGLAEAAAERKPDVAILVDIPDFNLRLAKKLKALGVPVAYYVSPMIWAWRRGRVRTIKRLVDRMLCILPFEEDFYREAGVSARYVGSPVVEQVPSPDTATAFRERLGLSKDAPTLALLPGSRMGEIRRLLPDMVEAAKRLSAERPGLQVVVPLAPTIDREEITSRFEGSGVTPILVEGRAPEVVGASDAAVVASGTAVLEAGLMQRPLVVVYRVSLITYWVGRLMLKVAFVSLINLLAGRRVVPELLQGEMTPERIAEEVRRVWIPGAPREEMLQGLAEMRGRLGETGAATRAAESVLELLPPGRV</sequence>
<protein>
    <recommendedName>
        <fullName evidence="1">Lipid-A-disaccharide synthase</fullName>
        <ecNumber evidence="1">2.4.1.182</ecNumber>
    </recommendedName>
</protein>